<evidence type="ECO:0000255" key="1">
    <source>
        <dbReference type="HAMAP-Rule" id="MF_01844"/>
    </source>
</evidence>
<reference key="1">
    <citation type="journal article" date="2007" name="PLoS ONE">
        <title>Complete genomic characterization of a pathogenic A.II strain of Francisella tularensis subspecies tularensis.</title>
        <authorList>
            <person name="Beckstrom-Sternberg S.M."/>
            <person name="Auerbach R.K."/>
            <person name="Godbole S."/>
            <person name="Pearson J.V."/>
            <person name="Beckstrom-Sternberg J.S."/>
            <person name="Deng Z."/>
            <person name="Munk C."/>
            <person name="Kubota K."/>
            <person name="Zhou Y."/>
            <person name="Bruce D."/>
            <person name="Noronha J."/>
            <person name="Scheuermann R.H."/>
            <person name="Wang A."/>
            <person name="Wei X."/>
            <person name="Wang J."/>
            <person name="Hao J."/>
            <person name="Wagner D.M."/>
            <person name="Brettin T.S."/>
            <person name="Brown N."/>
            <person name="Gilna P."/>
            <person name="Keim P.S."/>
        </authorList>
    </citation>
    <scope>NUCLEOTIDE SEQUENCE [LARGE SCALE GENOMIC DNA]</scope>
    <source>
        <strain>WY96-3418</strain>
    </source>
</reference>
<organism>
    <name type="scientific">Francisella tularensis subsp. tularensis (strain WY96-3418)</name>
    <dbReference type="NCBI Taxonomy" id="418136"/>
    <lineage>
        <taxon>Bacteria</taxon>
        <taxon>Pseudomonadati</taxon>
        <taxon>Pseudomonadota</taxon>
        <taxon>Gammaproteobacteria</taxon>
        <taxon>Thiotrichales</taxon>
        <taxon>Francisellaceae</taxon>
        <taxon>Francisella</taxon>
    </lineage>
</organism>
<name>NHAA_FRATW</name>
<proteinExistence type="inferred from homology"/>
<feature type="chain" id="PRO_0000334300" description="Na(+)/H(+) antiporter NhaA">
    <location>
        <begin position="1"/>
        <end position="383"/>
    </location>
</feature>
<feature type="transmembrane region" description="Helical" evidence="1">
    <location>
        <begin position="10"/>
        <end position="30"/>
    </location>
</feature>
<feature type="transmembrane region" description="Helical" evidence="1">
    <location>
        <begin position="56"/>
        <end position="76"/>
    </location>
</feature>
<feature type="transmembrane region" description="Helical" evidence="1">
    <location>
        <begin position="91"/>
        <end position="111"/>
    </location>
</feature>
<feature type="transmembrane region" description="Helical" evidence="1">
    <location>
        <begin position="121"/>
        <end position="141"/>
    </location>
</feature>
<feature type="transmembrane region" description="Helical" evidence="1">
    <location>
        <begin position="150"/>
        <end position="170"/>
    </location>
</feature>
<feature type="transmembrane region" description="Helical" evidence="1">
    <location>
        <begin position="174"/>
        <end position="194"/>
    </location>
</feature>
<feature type="transmembrane region" description="Helical" evidence="1">
    <location>
        <begin position="206"/>
        <end position="226"/>
    </location>
</feature>
<feature type="transmembrane region" description="Helical" evidence="1">
    <location>
        <begin position="254"/>
        <end position="274"/>
    </location>
</feature>
<feature type="transmembrane region" description="Helical" evidence="1">
    <location>
        <begin position="289"/>
        <end position="308"/>
    </location>
</feature>
<feature type="transmembrane region" description="Helical" evidence="1">
    <location>
        <begin position="327"/>
        <end position="347"/>
    </location>
</feature>
<feature type="transmembrane region" description="Helical" evidence="1">
    <location>
        <begin position="355"/>
        <end position="375"/>
    </location>
</feature>
<comment type="function">
    <text evidence="1">Na(+)/H(+) antiporter that extrudes sodium in exchange for external protons.</text>
</comment>
<comment type="catalytic activity">
    <reaction evidence="1">
        <text>Na(+)(in) + 2 H(+)(out) = Na(+)(out) + 2 H(+)(in)</text>
        <dbReference type="Rhea" id="RHEA:29251"/>
        <dbReference type="ChEBI" id="CHEBI:15378"/>
        <dbReference type="ChEBI" id="CHEBI:29101"/>
    </reaction>
    <physiologicalReaction direction="left-to-right" evidence="1">
        <dbReference type="Rhea" id="RHEA:29252"/>
    </physiologicalReaction>
</comment>
<comment type="subcellular location">
    <subcellularLocation>
        <location evidence="1">Cell inner membrane</location>
        <topology evidence="1">Multi-pass membrane protein</topology>
    </subcellularLocation>
</comment>
<comment type="similarity">
    <text evidence="1">Belongs to the NhaA Na(+)/H(+) (TC 2.A.33) antiporter family.</text>
</comment>
<sequence>MGASQKNQELIGGLILFSAALLAIVVNNSPLASYYAMLETINVKLGIENLVIDKNLMHWINDGLMAIYFLYIGLEIKREIIVGTLSKPSNIITPAIAAFAGLAMPSLIYLSINHDIKVINGWAIPSATDIAFTLAILALLGTRVPAKLKLLVITIAIFDDIAAIAIIAIFYTKSLSLLSLSLGTLFILAMIICNRIFKINRSSVYVVLGFFAWFCTIKSGVHATLAGFTTALCIPFRENDKDSPANFMEDSLHPWIIYFILPVFAFANAGISFSGISFSILFEPITLGIIWGLFVGKQLGIFSILAVFKKLKWFKLGESFSNLQLYGISLLCGIGFTMSLFIGVLAFNDTHLLNAIKIGVVVGSVLSGFFGYIVLRFIVTNPS</sequence>
<accession>A4IVT5</accession>
<protein>
    <recommendedName>
        <fullName evidence="1">Na(+)/H(+) antiporter NhaA</fullName>
    </recommendedName>
    <alternativeName>
        <fullName evidence="1">Sodium/proton antiporter NhaA</fullName>
    </alternativeName>
</protein>
<keyword id="KW-0050">Antiport</keyword>
<keyword id="KW-0997">Cell inner membrane</keyword>
<keyword id="KW-1003">Cell membrane</keyword>
<keyword id="KW-0406">Ion transport</keyword>
<keyword id="KW-0472">Membrane</keyword>
<keyword id="KW-0915">Sodium</keyword>
<keyword id="KW-0739">Sodium transport</keyword>
<keyword id="KW-0812">Transmembrane</keyword>
<keyword id="KW-1133">Transmembrane helix</keyword>
<keyword id="KW-0813">Transport</keyword>
<dbReference type="EMBL" id="CP000608">
    <property type="protein sequence ID" value="ABO46037.1"/>
    <property type="molecule type" value="Genomic_DNA"/>
</dbReference>
<dbReference type="RefSeq" id="WP_003024410.1">
    <property type="nucleotide sequence ID" value="NC_009257.1"/>
</dbReference>
<dbReference type="SMR" id="A4IVT5"/>
<dbReference type="KEGG" id="ftw:FTW_0027"/>
<dbReference type="HOGENOM" id="CLU_015803_1_0_6"/>
<dbReference type="GO" id="GO:0005886">
    <property type="term" value="C:plasma membrane"/>
    <property type="evidence" value="ECO:0007669"/>
    <property type="project" value="UniProtKB-SubCell"/>
</dbReference>
<dbReference type="GO" id="GO:0015385">
    <property type="term" value="F:sodium:proton antiporter activity"/>
    <property type="evidence" value="ECO:0007669"/>
    <property type="project" value="TreeGrafter"/>
</dbReference>
<dbReference type="GO" id="GO:0006885">
    <property type="term" value="P:regulation of pH"/>
    <property type="evidence" value="ECO:0007669"/>
    <property type="project" value="InterPro"/>
</dbReference>
<dbReference type="Gene3D" id="1.20.1530.10">
    <property type="entry name" value="Na+/H+ antiporter like domain"/>
    <property type="match status" value="1"/>
</dbReference>
<dbReference type="HAMAP" id="MF_01844">
    <property type="entry name" value="NhaA"/>
    <property type="match status" value="1"/>
</dbReference>
<dbReference type="InterPro" id="IPR023171">
    <property type="entry name" value="Na/H_antiporter_dom_sf"/>
</dbReference>
<dbReference type="InterPro" id="IPR004670">
    <property type="entry name" value="NhaA"/>
</dbReference>
<dbReference type="NCBIfam" id="TIGR00773">
    <property type="entry name" value="NhaA"/>
    <property type="match status" value="1"/>
</dbReference>
<dbReference type="NCBIfam" id="NF007111">
    <property type="entry name" value="PRK09560.1"/>
    <property type="match status" value="1"/>
</dbReference>
<dbReference type="NCBIfam" id="NF007112">
    <property type="entry name" value="PRK09561.1"/>
    <property type="match status" value="1"/>
</dbReference>
<dbReference type="NCBIfam" id="NF011427">
    <property type="entry name" value="PRK14854.1"/>
    <property type="match status" value="1"/>
</dbReference>
<dbReference type="PANTHER" id="PTHR30341:SF0">
    <property type="entry name" value="NA(+)_H(+) ANTIPORTER NHAA"/>
    <property type="match status" value="1"/>
</dbReference>
<dbReference type="PANTHER" id="PTHR30341">
    <property type="entry name" value="SODIUM ION/PROTON ANTIPORTER NHAA-RELATED"/>
    <property type="match status" value="1"/>
</dbReference>
<dbReference type="Pfam" id="PF06965">
    <property type="entry name" value="Na_H_antiport_1"/>
    <property type="match status" value="1"/>
</dbReference>
<gene>
    <name evidence="1" type="primary">nhaA</name>
    <name type="ordered locus">FTW_0027</name>
</gene>